<keyword id="KW-0903">Direct protein sequencing</keyword>
<keyword id="KW-0378">Hydrolase</keyword>
<evidence type="ECO:0000269" key="1">
    <source>
    </source>
</evidence>
<evidence type="ECO:0000303" key="2">
    <source>
    </source>
</evidence>
<evidence type="ECO:0000305" key="3"/>
<evidence type="ECO:0000305" key="4">
    <source>
    </source>
</evidence>
<proteinExistence type="evidence at protein level"/>
<organism>
    <name type="scientific">Thauera aromatica</name>
    <dbReference type="NCBI Taxonomy" id="59405"/>
    <lineage>
        <taxon>Bacteria</taxon>
        <taxon>Pseudomonadati</taxon>
        <taxon>Pseudomonadota</taxon>
        <taxon>Betaproteobacteria</taxon>
        <taxon>Rhodocyclales</taxon>
        <taxon>Zoogloeaceae</taxon>
        <taxon>Thauera</taxon>
    </lineage>
</organism>
<comment type="function">
    <text evidence="1">Involved in the central benzoyl-CoA catabolism. Catalyzes the addition of one molecule of water to the double bond and the hydrolytic cleavage of C-C bond in the alicyclic ring, 6-oxocyclohex-1-ene-1-carbonyl-CoA (6-OCH-CoA) to yield 3-hydroxypimelyl-CoA.</text>
</comment>
<comment type="catalytic activity">
    <reaction evidence="1">
        <text>6-oxocyclohex-1-ene-1-carbonyl-CoA + 2 H2O = 3-hydroxy-6-carboxyhexanoyl-CoA + H(+)</text>
        <dbReference type="Rhea" id="RHEA:39651"/>
        <dbReference type="ChEBI" id="CHEBI:15377"/>
        <dbReference type="ChEBI" id="CHEBI:15378"/>
        <dbReference type="ChEBI" id="CHEBI:57343"/>
        <dbReference type="ChEBI" id="CHEBI:76526"/>
        <dbReference type="EC" id="3.7.1.21"/>
    </reaction>
</comment>
<comment type="pathway">
    <text evidence="4">Aromatic compound metabolism; benzoyl-CoA degradation.</text>
</comment>
<comment type="subunit">
    <text evidence="1">Homotetramer.</text>
</comment>
<comment type="similarity">
    <text evidence="3">Belongs to the enoyl-CoA hydratase/isomerase family.</text>
</comment>
<feature type="chain" id="PRO_0000430865" description="6-oxocyclohex-1-ene-1-carbonyl-CoA hydrolase">
    <location>
        <begin position="1"/>
        <end position="377"/>
    </location>
</feature>
<protein>
    <recommendedName>
        <fullName evidence="2">6-oxocyclohex-1-ene-1-carbonyl-CoA hydrolase</fullName>
        <ecNumber evidence="1">3.7.1.21</ecNumber>
    </recommendedName>
    <alternativeName>
        <fullName evidence="3">6-oxocyclohex-1-ene-1-carbonyl-CoA hydratase</fullName>
    </alternativeName>
    <alternativeName>
        <fullName evidence="2">Beta-oxoacyl-CoA hydrolase</fullName>
        <shortName evidence="2">Oah</shortName>
    </alternativeName>
</protein>
<accession>O87872</accession>
<name>BAMA_THAAR</name>
<sequence>MNPTTQKLVEQNAPAQLVDHNLVPETVCPGVLYEKRPARNLKGEVVPGLYNVWISLDNPKQYNSYTTDMVKGLILAFRAASCARDVASVVFTAVGDKAFCTGGNTKEYAEYYAGNPQEYRQYMRLFNDMVSAILGCDKPVICRVNGMRIGGGQEIGMAADFTVAQDLANFGQAGPKHGSAAIGGATDFLPLMIGCEQAMVSGTLCEPFSAHKANRLGICMQIVPALKVDGKFIANPLVVTDRYLDEFGRIIHGEFKTGDELAAGKELMKRGEIDLSLLDEAVEKLCAKLISTFPECLTKSFEELRKPKLDAWNRNKENSRAWLALNMMNEARTGFRAFNEGNKETGREIEFTDLRQALAKGMPWTPELIESLMPGAK</sequence>
<dbReference type="EC" id="3.7.1.21" evidence="1"/>
<dbReference type="EMBL" id="AJ224959">
    <property type="protein sequence ID" value="CAA12245.1"/>
    <property type="molecule type" value="Genomic_DNA"/>
</dbReference>
<dbReference type="SMR" id="O87872"/>
<dbReference type="KEGG" id="ag:CAA12245"/>
<dbReference type="BRENDA" id="3.7.1.21">
    <property type="organism ID" value="6271"/>
</dbReference>
<dbReference type="UniPathway" id="UPA00739"/>
<dbReference type="GO" id="GO:0005829">
    <property type="term" value="C:cytosol"/>
    <property type="evidence" value="ECO:0007669"/>
    <property type="project" value="TreeGrafter"/>
</dbReference>
<dbReference type="GO" id="GO:0008935">
    <property type="term" value="F:1,4-dihydroxy-2-naphthoyl-CoA synthase activity"/>
    <property type="evidence" value="ECO:0007669"/>
    <property type="project" value="TreeGrafter"/>
</dbReference>
<dbReference type="GO" id="GO:0018807">
    <property type="term" value="F:6-hydroxycyclohex-1-ene-1-carboxyl-CoA hydratase activity"/>
    <property type="evidence" value="ECO:0007669"/>
    <property type="project" value="UniProtKB-EC"/>
</dbReference>
<dbReference type="GO" id="GO:0016823">
    <property type="term" value="F:hydrolase activity, acting on acid carbon-carbon bonds, in ketonic substances"/>
    <property type="evidence" value="ECO:0000314"/>
    <property type="project" value="UniProtKB"/>
</dbReference>
<dbReference type="GO" id="GO:1901788">
    <property type="term" value="P:benzoyl-CoA catabolic process"/>
    <property type="evidence" value="ECO:0000314"/>
    <property type="project" value="UniProtKB"/>
</dbReference>
<dbReference type="GO" id="GO:0009234">
    <property type="term" value="P:menaquinone biosynthetic process"/>
    <property type="evidence" value="ECO:0007669"/>
    <property type="project" value="TreeGrafter"/>
</dbReference>
<dbReference type="CDD" id="cd06558">
    <property type="entry name" value="crotonase-like"/>
    <property type="match status" value="1"/>
</dbReference>
<dbReference type="FunFam" id="3.90.226.10:FF:000112">
    <property type="entry name" value="6-oxocyclohex-1-ene-1-carbonyl-CoA hydrolase"/>
    <property type="match status" value="1"/>
</dbReference>
<dbReference type="Gene3D" id="3.90.226.10">
    <property type="entry name" value="2-enoyl-CoA Hydratase, Chain A, domain 1"/>
    <property type="match status" value="1"/>
</dbReference>
<dbReference type="InterPro" id="IPR029045">
    <property type="entry name" value="ClpP/crotonase-like_dom_sf"/>
</dbReference>
<dbReference type="InterPro" id="IPR017613">
    <property type="entry name" value="Dearomat_hydrolase"/>
</dbReference>
<dbReference type="InterPro" id="IPR001753">
    <property type="entry name" value="Enoyl-CoA_hydra/iso"/>
</dbReference>
<dbReference type="NCBIfam" id="TIGR03200">
    <property type="entry name" value="dearomat_oah"/>
    <property type="match status" value="1"/>
</dbReference>
<dbReference type="PANTHER" id="PTHR43113:SF1">
    <property type="entry name" value="1,4-DIHYDROXY-2-NAPHTHOYL-COA SYNTHASE, PEROXISOMAL"/>
    <property type="match status" value="1"/>
</dbReference>
<dbReference type="PANTHER" id="PTHR43113">
    <property type="entry name" value="NUCLEOSIDE-DIPHOSPHATE-SUGAR EPIMERASE"/>
    <property type="match status" value="1"/>
</dbReference>
<dbReference type="Pfam" id="PF00378">
    <property type="entry name" value="ECH_1"/>
    <property type="match status" value="1"/>
</dbReference>
<dbReference type="SUPFAM" id="SSF52096">
    <property type="entry name" value="ClpP/crotonase"/>
    <property type="match status" value="1"/>
</dbReference>
<gene>
    <name type="primary">oah</name>
</gene>
<reference key="1">
    <citation type="journal article" date="1998" name="Eur. J. Biochem.">
        <title>Genes coding for the benzoyl-CoA pathway of anaerobic aromatic metabolism in the bacterium Thauera aromatica.</title>
        <authorList>
            <person name="Breese K."/>
            <person name="Boll M."/>
            <person name="Alt-Moerbe J."/>
            <person name="Schaegger H."/>
            <person name="Fuchs G."/>
        </authorList>
    </citation>
    <scope>NUCLEOTIDE SEQUENCE [GENOMIC DNA]</scope>
    <scope>PROTEIN SEQUENCE OF 1-8</scope>
    <scope>PATHWAY</scope>
    <source>
        <strain>DSM 6984 / CIP 107765 / K172</strain>
    </source>
</reference>
<reference key="2">
    <citation type="journal article" date="1999" name="Eur. J. Biochem.">
        <title>6-Hydroxycyclohex-1-ene-1-carbonyl-CoA dehydrogenase and 6-oxocyclohex-1-ene-1-carbonyl-CoA hydrolase, enzymes of the benzoyl-CoA pathway of anaerobic aromatic metabolism in the denitrifying bacterium Thauera aromatica.</title>
        <authorList>
            <person name="Laempe D."/>
            <person name="Jahn M."/>
            <person name="Fuchs G."/>
        </authorList>
    </citation>
    <scope>FUNCTION</scope>
    <scope>CATALYTIC ACTIVITY</scope>
    <scope>SUBUNIT</scope>
    <source>
        <strain>DSM 6984 / CIP 107765 / K172</strain>
    </source>
</reference>